<dbReference type="EMBL" id="AE016825">
    <property type="protein sequence ID" value="AAQ59413.1"/>
    <property type="molecule type" value="Genomic_DNA"/>
</dbReference>
<dbReference type="RefSeq" id="WP_011135290.1">
    <property type="nucleotide sequence ID" value="NC_005085.1"/>
</dbReference>
<dbReference type="STRING" id="243365.CV_1738"/>
<dbReference type="KEGG" id="cvi:CV_1738"/>
<dbReference type="eggNOG" id="COG1032">
    <property type="taxonomic scope" value="Bacteria"/>
</dbReference>
<dbReference type="HOGENOM" id="CLU_018288_2_0_4"/>
<dbReference type="OrthoDB" id="9803479at2"/>
<dbReference type="Proteomes" id="UP000001424">
    <property type="component" value="Chromosome"/>
</dbReference>
<dbReference type="GO" id="GO:0051539">
    <property type="term" value="F:4 iron, 4 sulfur cluster binding"/>
    <property type="evidence" value="ECO:0007669"/>
    <property type="project" value="UniProtKB-KW"/>
</dbReference>
<dbReference type="GO" id="GO:0003824">
    <property type="term" value="F:catalytic activity"/>
    <property type="evidence" value="ECO:0007669"/>
    <property type="project" value="InterPro"/>
</dbReference>
<dbReference type="GO" id="GO:0005506">
    <property type="term" value="F:iron ion binding"/>
    <property type="evidence" value="ECO:0007669"/>
    <property type="project" value="UniProtKB-UniRule"/>
</dbReference>
<dbReference type="Gene3D" id="3.80.30.20">
    <property type="entry name" value="tm_1862 like domain"/>
    <property type="match status" value="1"/>
</dbReference>
<dbReference type="HAMAP" id="MF_01251">
    <property type="entry name" value="UPF0313"/>
    <property type="match status" value="1"/>
</dbReference>
<dbReference type="InterPro" id="IPR006638">
    <property type="entry name" value="Elp3/MiaA/NifB-like_rSAM"/>
</dbReference>
<dbReference type="InterPro" id="IPR020612">
    <property type="entry name" value="Methylthiotransferase_CS"/>
</dbReference>
<dbReference type="InterPro" id="IPR007197">
    <property type="entry name" value="rSAM"/>
</dbReference>
<dbReference type="InterPro" id="IPR023404">
    <property type="entry name" value="rSAM_horseshoe"/>
</dbReference>
<dbReference type="InterPro" id="IPR022946">
    <property type="entry name" value="UPF0313"/>
</dbReference>
<dbReference type="InterPro" id="IPR024560">
    <property type="entry name" value="UPF0313_C"/>
</dbReference>
<dbReference type="InterPro" id="IPR013704">
    <property type="entry name" value="UPF0313_N"/>
</dbReference>
<dbReference type="NCBIfam" id="TIGR03904">
    <property type="entry name" value="SAM_YgiQ"/>
    <property type="match status" value="1"/>
</dbReference>
<dbReference type="PANTHER" id="PTHR32331">
    <property type="entry name" value="UPF0313 PROTEIN YGIQ"/>
    <property type="match status" value="1"/>
</dbReference>
<dbReference type="PANTHER" id="PTHR32331:SF0">
    <property type="entry name" value="UPF0313 PROTEIN YGIQ"/>
    <property type="match status" value="1"/>
</dbReference>
<dbReference type="Pfam" id="PF11842">
    <property type="entry name" value="DUF3362"/>
    <property type="match status" value="1"/>
</dbReference>
<dbReference type="Pfam" id="PF04055">
    <property type="entry name" value="Radical_SAM"/>
    <property type="match status" value="1"/>
</dbReference>
<dbReference type="Pfam" id="PF08497">
    <property type="entry name" value="Radical_SAM_N"/>
    <property type="match status" value="1"/>
</dbReference>
<dbReference type="SFLD" id="SFLDG01082">
    <property type="entry name" value="B12-binding_domain_containing"/>
    <property type="match status" value="1"/>
</dbReference>
<dbReference type="SFLD" id="SFLDS00029">
    <property type="entry name" value="Radical_SAM"/>
    <property type="match status" value="1"/>
</dbReference>
<dbReference type="SFLD" id="SFLDG01069">
    <property type="entry name" value="UPF0313"/>
    <property type="match status" value="1"/>
</dbReference>
<dbReference type="SMART" id="SM00729">
    <property type="entry name" value="Elp3"/>
    <property type="match status" value="1"/>
</dbReference>
<dbReference type="SUPFAM" id="SSF102114">
    <property type="entry name" value="Radical SAM enzymes"/>
    <property type="match status" value="1"/>
</dbReference>
<dbReference type="PROSITE" id="PS51918">
    <property type="entry name" value="RADICAL_SAM"/>
    <property type="match status" value="1"/>
</dbReference>
<keyword id="KW-0004">4Fe-4S</keyword>
<keyword id="KW-0408">Iron</keyword>
<keyword id="KW-0411">Iron-sulfur</keyword>
<keyword id="KW-0479">Metal-binding</keyword>
<keyword id="KW-1185">Reference proteome</keyword>
<keyword id="KW-0949">S-adenosyl-L-methionine</keyword>
<comment type="cofactor">
    <cofactor evidence="1">
        <name>[4Fe-4S] cluster</name>
        <dbReference type="ChEBI" id="CHEBI:49883"/>
    </cofactor>
    <text evidence="1">Binds 1 [4Fe-4S] cluster. The cluster is coordinated with 3 cysteines and an exchangeable S-adenosyl-L-methionine.</text>
</comment>
<comment type="similarity">
    <text evidence="1">Belongs to the UPF0313 family.</text>
</comment>
<protein>
    <recommendedName>
        <fullName evidence="1">UPF0313 protein CV_1738</fullName>
    </recommendedName>
</protein>
<organism>
    <name type="scientific">Chromobacterium violaceum (strain ATCC 12472 / DSM 30191 / JCM 1249 / CCUG 213 / NBRC 12614 / NCIMB 9131 / NCTC 9757 / MK)</name>
    <dbReference type="NCBI Taxonomy" id="243365"/>
    <lineage>
        <taxon>Bacteria</taxon>
        <taxon>Pseudomonadati</taxon>
        <taxon>Pseudomonadota</taxon>
        <taxon>Betaproteobacteria</taxon>
        <taxon>Neisseriales</taxon>
        <taxon>Chromobacteriaceae</taxon>
        <taxon>Chromobacterium</taxon>
    </lineage>
</organism>
<accession>Q7NX89</accession>
<name>Y1738_CHRVO</name>
<evidence type="ECO:0000255" key="1">
    <source>
        <dbReference type="HAMAP-Rule" id="MF_01251"/>
    </source>
</evidence>
<evidence type="ECO:0000255" key="2">
    <source>
        <dbReference type="PROSITE-ProRule" id="PRU01266"/>
    </source>
</evidence>
<evidence type="ECO:0000256" key="3">
    <source>
        <dbReference type="SAM" id="MobiDB-lite"/>
    </source>
</evidence>
<gene>
    <name type="ordered locus">CV_1738</name>
</gene>
<sequence length="758" mass="85226">MTTPQAKPIDSYRKYWASRFGTAPFLPMTRAEMDELGWDSCDIILVTGDCYIDHPSFGMALVGRLLEAQGFRVGIIAQPDWHSADAFRELGKPNLFFGVTAGNMDSMINRYTADRRPRSDDAYTPNAEPNKRPDRAVTVYAQRCREAYPGIGVMIGSIEASLRRIAHYDYWSDKVRQSVLITSKADILLYGNAERALVEIAHRAAKGEKLSEMRDIRGTAFIVPHGWRPDEEWQEMDSSVVDIPGRVDPHLNPYQEIPEQAAEATKGIDPSKPQVIRIESREERLAKRRAERAKTVIRIPAYEAVAHDPVLYAHASRTLHLESNPGNARALVQMHGERDVWLTPPPIPLTTEEMDFVYGLPYARNPHPAYGDAHIPAWEMIKYSVNIMRGCFGGCTFCSITEHEGRIIQSRSEESILHEIEEIRDKTPGFTGHISDLGGPTANMYRLSCKDPKIERSCRKLSCVFPDICENLNTDHSHLIQLYRKARALPGVKKINIQSGLRYDLAVRSPEYIKELVQHHVGGYLKIAPEHTEDGPLSKMMKPGMGAYDKFKELFERFSRQAGKEQYLIPYFIAAHPGTSDEDMMNLALWLKKNNFRLDQVQTFTPTPMAMATTMWHTRRNPLKRLSRSSEKVDVVRDGYRRKLHKAFLRYHHPDNWQIIHDALIQMGRSDLIGHSKHCLIPPTPPGDKAAAVRHKMGAPMNRGKSPGARHPQQGQRAKPAAAVGARGQGGQGGRPGAGKPQAGRSPAKPGGKTSRSR</sequence>
<feature type="chain" id="PRO_0000076381" description="UPF0313 protein CV_1738">
    <location>
        <begin position="1"/>
        <end position="758"/>
    </location>
</feature>
<feature type="domain" description="Radical SAM core" evidence="2">
    <location>
        <begin position="377"/>
        <end position="642"/>
    </location>
</feature>
<feature type="region of interest" description="Disordered" evidence="3">
    <location>
        <begin position="698"/>
        <end position="758"/>
    </location>
</feature>
<feature type="compositionally biased region" description="Gly residues" evidence="3">
    <location>
        <begin position="727"/>
        <end position="737"/>
    </location>
</feature>
<feature type="binding site" evidence="1">
    <location>
        <position position="391"/>
    </location>
    <ligand>
        <name>[4Fe-4S] cluster</name>
        <dbReference type="ChEBI" id="CHEBI:49883"/>
        <note>4Fe-4S-S-AdoMet</note>
    </ligand>
</feature>
<feature type="binding site" evidence="1">
    <location>
        <position position="395"/>
    </location>
    <ligand>
        <name>[4Fe-4S] cluster</name>
        <dbReference type="ChEBI" id="CHEBI:49883"/>
        <note>4Fe-4S-S-AdoMet</note>
    </ligand>
</feature>
<feature type="binding site" evidence="1">
    <location>
        <position position="398"/>
    </location>
    <ligand>
        <name>[4Fe-4S] cluster</name>
        <dbReference type="ChEBI" id="CHEBI:49883"/>
        <note>4Fe-4S-S-AdoMet</note>
    </ligand>
</feature>
<proteinExistence type="inferred from homology"/>
<reference key="1">
    <citation type="journal article" date="2003" name="Proc. Natl. Acad. Sci. U.S.A.">
        <title>The complete genome sequence of Chromobacterium violaceum reveals remarkable and exploitable bacterial adaptability.</title>
        <authorList>
            <person name="Vasconcelos A.T.R."/>
            <person name="de Almeida D.F."/>
            <person name="Hungria M."/>
            <person name="Guimaraes C.T."/>
            <person name="Antonio R.V."/>
            <person name="Almeida F.C."/>
            <person name="de Almeida L.G.P."/>
            <person name="de Almeida R."/>
            <person name="Alves-Gomes J.A."/>
            <person name="Andrade E.M."/>
            <person name="Araripe J."/>
            <person name="de Araujo M.F.F."/>
            <person name="Astolfi-Filho S."/>
            <person name="Azevedo V."/>
            <person name="Baptista A.J."/>
            <person name="Bataus L.A.M."/>
            <person name="Batista J.S."/>
            <person name="Belo A."/>
            <person name="van den Berg C."/>
            <person name="Bogo M."/>
            <person name="Bonatto S."/>
            <person name="Bordignon J."/>
            <person name="Brigido M.M."/>
            <person name="Brito C.A."/>
            <person name="Brocchi M."/>
            <person name="Burity H.A."/>
            <person name="Camargo A.A."/>
            <person name="Cardoso D.D.P."/>
            <person name="Carneiro N.P."/>
            <person name="Carraro D.M."/>
            <person name="Carvalho C.M.B."/>
            <person name="Cascardo J.C.M."/>
            <person name="Cavada B.S."/>
            <person name="Chueire L.M.O."/>
            <person name="Creczynski-Pasa T.B."/>
            <person name="Cunha-Junior N.C."/>
            <person name="Fagundes N."/>
            <person name="Falcao C.L."/>
            <person name="Fantinatti F."/>
            <person name="Farias I.P."/>
            <person name="Felipe M.S.S."/>
            <person name="Ferrari L.P."/>
            <person name="Ferro J.A."/>
            <person name="Ferro M.I.T."/>
            <person name="Franco G.R."/>
            <person name="Freitas N.S.A."/>
            <person name="Furlan L.R."/>
            <person name="Gazzinelli R.T."/>
            <person name="Gomes E.A."/>
            <person name="Goncalves P.R."/>
            <person name="Grangeiro T.B."/>
            <person name="Grattapaglia D."/>
            <person name="Grisard E.C."/>
            <person name="Hanna E.S."/>
            <person name="Jardim S.N."/>
            <person name="Laurino J."/>
            <person name="Leoi L.C.T."/>
            <person name="Lima L.F.A."/>
            <person name="Loureiro M.F."/>
            <person name="Lyra M.C.C.P."/>
            <person name="Madeira H.M.F."/>
            <person name="Manfio G.P."/>
            <person name="Maranhao A.Q."/>
            <person name="Martins W.S."/>
            <person name="di Mauro S.M.Z."/>
            <person name="de Medeiros S.R.B."/>
            <person name="Meissner R.V."/>
            <person name="Moreira M.A.M."/>
            <person name="Nascimento F.F."/>
            <person name="Nicolas M.F."/>
            <person name="Oliveira J.G."/>
            <person name="Oliveira S.C."/>
            <person name="Paixao R.F.C."/>
            <person name="Parente J.A."/>
            <person name="Pedrosa F.O."/>
            <person name="Pena S.D.J."/>
            <person name="Pereira J.O."/>
            <person name="Pereira M."/>
            <person name="Pinto L.S.R.C."/>
            <person name="Pinto L.S."/>
            <person name="Porto J.I.R."/>
            <person name="Potrich D.P."/>
            <person name="Ramalho-Neto C.E."/>
            <person name="Reis A.M.M."/>
            <person name="Rigo L.U."/>
            <person name="Rondinelli E."/>
            <person name="Santos E.B.P."/>
            <person name="Santos F.R."/>
            <person name="Schneider M.P.C."/>
            <person name="Seuanez H.N."/>
            <person name="Silva A.M.R."/>
            <person name="da Silva A.L.C."/>
            <person name="Silva D.W."/>
            <person name="Silva R."/>
            <person name="Simoes I.C."/>
            <person name="Simon D."/>
            <person name="Soares C.M.A."/>
            <person name="Soares R.B.A."/>
            <person name="Souza E.M."/>
            <person name="Souza K.R.L."/>
            <person name="Souza R.C."/>
            <person name="Steffens M.B.R."/>
            <person name="Steindel M."/>
            <person name="Teixeira S.R."/>
            <person name="Urmenyi T."/>
            <person name="Vettore A."/>
            <person name="Wassem R."/>
            <person name="Zaha A."/>
            <person name="Simpson A.J.G."/>
        </authorList>
    </citation>
    <scope>NUCLEOTIDE SEQUENCE [LARGE SCALE GENOMIC DNA]</scope>
    <source>
        <strain>ATCC 12472 / DSM 30191 / JCM 1249 / CCUG 213 / NBRC 12614 / NCIMB 9131 / NCTC 9757 / MK</strain>
    </source>
</reference>